<feature type="chain" id="PRO_0000268453" description="Bifunctional protein FolD 2">
    <location>
        <begin position="1"/>
        <end position="300"/>
    </location>
</feature>
<feature type="binding site" evidence="1">
    <location>
        <begin position="165"/>
        <end position="167"/>
    </location>
    <ligand>
        <name>NADP(+)</name>
        <dbReference type="ChEBI" id="CHEBI:58349"/>
    </ligand>
</feature>
<feature type="binding site" evidence="1">
    <location>
        <position position="190"/>
    </location>
    <ligand>
        <name>NADP(+)</name>
        <dbReference type="ChEBI" id="CHEBI:58349"/>
    </ligand>
</feature>
<feature type="binding site" evidence="1">
    <location>
        <position position="231"/>
    </location>
    <ligand>
        <name>NADP(+)</name>
        <dbReference type="ChEBI" id="CHEBI:58349"/>
    </ligand>
</feature>
<dbReference type="EC" id="1.5.1.5" evidence="1"/>
<dbReference type="EC" id="3.5.4.9" evidence="1"/>
<dbReference type="EMBL" id="AE016853">
    <property type="protein sequence ID" value="AAO55962.1"/>
    <property type="molecule type" value="Genomic_DNA"/>
</dbReference>
<dbReference type="RefSeq" id="NP_792267.1">
    <property type="nucleotide sequence ID" value="NC_004578.1"/>
</dbReference>
<dbReference type="RefSeq" id="WP_011104015.1">
    <property type="nucleotide sequence ID" value="NC_004578.1"/>
</dbReference>
<dbReference type="SMR" id="Q883B5"/>
<dbReference type="STRING" id="223283.PSPTO_2453"/>
<dbReference type="GeneID" id="1184105"/>
<dbReference type="KEGG" id="pst:PSPTO_2453"/>
<dbReference type="PATRIC" id="fig|223283.9.peg.2489"/>
<dbReference type="eggNOG" id="COG0190">
    <property type="taxonomic scope" value="Bacteria"/>
</dbReference>
<dbReference type="HOGENOM" id="CLU_034045_2_1_6"/>
<dbReference type="OrthoDB" id="9803580at2"/>
<dbReference type="PhylomeDB" id="Q883B5"/>
<dbReference type="UniPathway" id="UPA00193"/>
<dbReference type="Proteomes" id="UP000002515">
    <property type="component" value="Chromosome"/>
</dbReference>
<dbReference type="GO" id="GO:0005829">
    <property type="term" value="C:cytosol"/>
    <property type="evidence" value="ECO:0007669"/>
    <property type="project" value="TreeGrafter"/>
</dbReference>
<dbReference type="GO" id="GO:0004477">
    <property type="term" value="F:methenyltetrahydrofolate cyclohydrolase activity"/>
    <property type="evidence" value="ECO:0007669"/>
    <property type="project" value="UniProtKB-UniRule"/>
</dbReference>
<dbReference type="GO" id="GO:0004488">
    <property type="term" value="F:methylenetetrahydrofolate dehydrogenase (NADP+) activity"/>
    <property type="evidence" value="ECO:0007669"/>
    <property type="project" value="UniProtKB-UniRule"/>
</dbReference>
<dbReference type="GO" id="GO:0000105">
    <property type="term" value="P:L-histidine biosynthetic process"/>
    <property type="evidence" value="ECO:0007669"/>
    <property type="project" value="UniProtKB-KW"/>
</dbReference>
<dbReference type="GO" id="GO:0009086">
    <property type="term" value="P:methionine biosynthetic process"/>
    <property type="evidence" value="ECO:0007669"/>
    <property type="project" value="UniProtKB-KW"/>
</dbReference>
<dbReference type="GO" id="GO:0006164">
    <property type="term" value="P:purine nucleotide biosynthetic process"/>
    <property type="evidence" value="ECO:0007669"/>
    <property type="project" value="UniProtKB-KW"/>
</dbReference>
<dbReference type="GO" id="GO:0035999">
    <property type="term" value="P:tetrahydrofolate interconversion"/>
    <property type="evidence" value="ECO:0007669"/>
    <property type="project" value="UniProtKB-UniRule"/>
</dbReference>
<dbReference type="CDD" id="cd01080">
    <property type="entry name" value="NAD_bind_m-THF_DH_Cyclohyd"/>
    <property type="match status" value="1"/>
</dbReference>
<dbReference type="FunFam" id="3.40.50.720:FF:000006">
    <property type="entry name" value="Bifunctional protein FolD"/>
    <property type="match status" value="1"/>
</dbReference>
<dbReference type="FunFam" id="3.40.50.10860:FF:000005">
    <property type="entry name" value="C-1-tetrahydrofolate synthase, cytoplasmic, putative"/>
    <property type="match status" value="1"/>
</dbReference>
<dbReference type="Gene3D" id="3.40.50.10860">
    <property type="entry name" value="Leucine Dehydrogenase, chain A, domain 1"/>
    <property type="match status" value="1"/>
</dbReference>
<dbReference type="Gene3D" id="3.40.50.720">
    <property type="entry name" value="NAD(P)-binding Rossmann-like Domain"/>
    <property type="match status" value="1"/>
</dbReference>
<dbReference type="HAMAP" id="MF_01576">
    <property type="entry name" value="THF_DHG_CYH"/>
    <property type="match status" value="1"/>
</dbReference>
<dbReference type="InterPro" id="IPR046346">
    <property type="entry name" value="Aminoacid_DH-like_N_sf"/>
</dbReference>
<dbReference type="InterPro" id="IPR036291">
    <property type="entry name" value="NAD(P)-bd_dom_sf"/>
</dbReference>
<dbReference type="InterPro" id="IPR000672">
    <property type="entry name" value="THF_DH/CycHdrlase"/>
</dbReference>
<dbReference type="InterPro" id="IPR020630">
    <property type="entry name" value="THF_DH/CycHdrlase_cat_dom"/>
</dbReference>
<dbReference type="InterPro" id="IPR020867">
    <property type="entry name" value="THF_DH/CycHdrlase_CS"/>
</dbReference>
<dbReference type="InterPro" id="IPR020631">
    <property type="entry name" value="THF_DH/CycHdrlase_NAD-bd_dom"/>
</dbReference>
<dbReference type="NCBIfam" id="NF010785">
    <property type="entry name" value="PRK14188.1"/>
    <property type="match status" value="1"/>
</dbReference>
<dbReference type="NCBIfam" id="NF010790">
    <property type="entry name" value="PRK14194.1"/>
    <property type="match status" value="1"/>
</dbReference>
<dbReference type="PANTHER" id="PTHR48099:SF5">
    <property type="entry name" value="C-1-TETRAHYDROFOLATE SYNTHASE, CYTOPLASMIC"/>
    <property type="match status" value="1"/>
</dbReference>
<dbReference type="PANTHER" id="PTHR48099">
    <property type="entry name" value="C-1-TETRAHYDROFOLATE SYNTHASE, CYTOPLASMIC-RELATED"/>
    <property type="match status" value="1"/>
</dbReference>
<dbReference type="Pfam" id="PF00763">
    <property type="entry name" value="THF_DHG_CYH"/>
    <property type="match status" value="1"/>
</dbReference>
<dbReference type="Pfam" id="PF02882">
    <property type="entry name" value="THF_DHG_CYH_C"/>
    <property type="match status" value="1"/>
</dbReference>
<dbReference type="PRINTS" id="PR00085">
    <property type="entry name" value="THFDHDRGNASE"/>
</dbReference>
<dbReference type="SUPFAM" id="SSF53223">
    <property type="entry name" value="Aminoacid dehydrogenase-like, N-terminal domain"/>
    <property type="match status" value="1"/>
</dbReference>
<dbReference type="SUPFAM" id="SSF51735">
    <property type="entry name" value="NAD(P)-binding Rossmann-fold domains"/>
    <property type="match status" value="1"/>
</dbReference>
<dbReference type="PROSITE" id="PS00767">
    <property type="entry name" value="THF_DHG_CYH_2"/>
    <property type="match status" value="1"/>
</dbReference>
<gene>
    <name evidence="1" type="primary">folD2</name>
    <name type="ordered locus">PSPTO_2453</name>
</gene>
<organism>
    <name type="scientific">Pseudomonas syringae pv. tomato (strain ATCC BAA-871 / DC3000)</name>
    <dbReference type="NCBI Taxonomy" id="223283"/>
    <lineage>
        <taxon>Bacteria</taxon>
        <taxon>Pseudomonadati</taxon>
        <taxon>Pseudomonadota</taxon>
        <taxon>Gammaproteobacteria</taxon>
        <taxon>Pseudomonadales</taxon>
        <taxon>Pseudomonadaceae</taxon>
        <taxon>Pseudomonas</taxon>
    </lineage>
</organism>
<reference key="1">
    <citation type="journal article" date="2003" name="Proc. Natl. Acad. Sci. U.S.A.">
        <title>The complete genome sequence of the Arabidopsis and tomato pathogen Pseudomonas syringae pv. tomato DC3000.</title>
        <authorList>
            <person name="Buell C.R."/>
            <person name="Joardar V."/>
            <person name="Lindeberg M."/>
            <person name="Selengut J."/>
            <person name="Paulsen I.T."/>
            <person name="Gwinn M.L."/>
            <person name="Dodson R.J."/>
            <person name="DeBoy R.T."/>
            <person name="Durkin A.S."/>
            <person name="Kolonay J.F."/>
            <person name="Madupu R."/>
            <person name="Daugherty S.C."/>
            <person name="Brinkac L.M."/>
            <person name="Beanan M.J."/>
            <person name="Haft D.H."/>
            <person name="Nelson W.C."/>
            <person name="Davidsen T.M."/>
            <person name="Zafar N."/>
            <person name="Zhou L."/>
            <person name="Liu J."/>
            <person name="Yuan Q."/>
            <person name="Khouri H.M."/>
            <person name="Fedorova N.B."/>
            <person name="Tran B."/>
            <person name="Russell D."/>
            <person name="Berry K.J."/>
            <person name="Utterback T.R."/>
            <person name="Van Aken S.E."/>
            <person name="Feldblyum T.V."/>
            <person name="D'Ascenzo M."/>
            <person name="Deng W.-L."/>
            <person name="Ramos A.R."/>
            <person name="Alfano J.R."/>
            <person name="Cartinhour S."/>
            <person name="Chatterjee A.K."/>
            <person name="Delaney T.P."/>
            <person name="Lazarowitz S.G."/>
            <person name="Martin G.B."/>
            <person name="Schneider D.J."/>
            <person name="Tang X."/>
            <person name="Bender C.L."/>
            <person name="White O."/>
            <person name="Fraser C.M."/>
            <person name="Collmer A."/>
        </authorList>
    </citation>
    <scope>NUCLEOTIDE SEQUENCE [LARGE SCALE GENOMIC DNA]</scope>
    <source>
        <strain>ATCC BAA-871 / DC3000</strain>
    </source>
</reference>
<sequence>MSARIIDGKAAAARVLGQVRDDVHTLKAEGIEPALAVILVGNDPASEVYIRNKIVRAEEAGIRSLEHRLPADCSEARLLALIAELNTDRSVNGILLQLPLPAHINEAHALQAIAAAKDVDGFHSENVGGLSQGRNVLTPCTPSGCMHLLKETCGDLTGKHAVVIGRSNIVGKPMAALLLQAHCSVTVVHSRSTDAKALCQLADIVVAAVGRPRMIDAGWLKPGAVVIDVGINRIDDQGRSRLVGDVDFDNALDVVSAITPVPGGVGPMTIAFLMKNTVTAARQQAHAQRSQSEAVCLSIY</sequence>
<accession>Q883B5</accession>
<name>FOLD2_PSESM</name>
<comment type="function">
    <text evidence="1">Catalyzes the oxidation of 5,10-methylenetetrahydrofolate to 5,10-methenyltetrahydrofolate and then the hydrolysis of 5,10-methenyltetrahydrofolate to 10-formyltetrahydrofolate.</text>
</comment>
<comment type="catalytic activity">
    <reaction evidence="1">
        <text>(6R)-5,10-methylene-5,6,7,8-tetrahydrofolate + NADP(+) = (6R)-5,10-methenyltetrahydrofolate + NADPH</text>
        <dbReference type="Rhea" id="RHEA:22812"/>
        <dbReference type="ChEBI" id="CHEBI:15636"/>
        <dbReference type="ChEBI" id="CHEBI:57455"/>
        <dbReference type="ChEBI" id="CHEBI:57783"/>
        <dbReference type="ChEBI" id="CHEBI:58349"/>
        <dbReference type="EC" id="1.5.1.5"/>
    </reaction>
</comment>
<comment type="catalytic activity">
    <reaction evidence="1">
        <text>(6R)-5,10-methenyltetrahydrofolate + H2O = (6R)-10-formyltetrahydrofolate + H(+)</text>
        <dbReference type="Rhea" id="RHEA:23700"/>
        <dbReference type="ChEBI" id="CHEBI:15377"/>
        <dbReference type="ChEBI" id="CHEBI:15378"/>
        <dbReference type="ChEBI" id="CHEBI:57455"/>
        <dbReference type="ChEBI" id="CHEBI:195366"/>
        <dbReference type="EC" id="3.5.4.9"/>
    </reaction>
</comment>
<comment type="pathway">
    <text evidence="1">One-carbon metabolism; tetrahydrofolate interconversion.</text>
</comment>
<comment type="subunit">
    <text evidence="1">Homodimer.</text>
</comment>
<comment type="similarity">
    <text evidence="1">Belongs to the tetrahydrofolate dehydrogenase/cyclohydrolase family.</text>
</comment>
<evidence type="ECO:0000255" key="1">
    <source>
        <dbReference type="HAMAP-Rule" id="MF_01576"/>
    </source>
</evidence>
<proteinExistence type="inferred from homology"/>
<protein>
    <recommendedName>
        <fullName evidence="1">Bifunctional protein FolD 2</fullName>
    </recommendedName>
    <domain>
        <recommendedName>
            <fullName evidence="1">Methylenetetrahydrofolate dehydrogenase</fullName>
            <ecNumber evidence="1">1.5.1.5</ecNumber>
        </recommendedName>
    </domain>
    <domain>
        <recommendedName>
            <fullName evidence="1">Methenyltetrahydrofolate cyclohydrolase</fullName>
            <ecNumber evidence="1">3.5.4.9</ecNumber>
        </recommendedName>
    </domain>
</protein>
<keyword id="KW-0028">Amino-acid biosynthesis</keyword>
<keyword id="KW-0368">Histidine biosynthesis</keyword>
<keyword id="KW-0378">Hydrolase</keyword>
<keyword id="KW-0486">Methionine biosynthesis</keyword>
<keyword id="KW-0511">Multifunctional enzyme</keyword>
<keyword id="KW-0521">NADP</keyword>
<keyword id="KW-0554">One-carbon metabolism</keyword>
<keyword id="KW-0560">Oxidoreductase</keyword>
<keyword id="KW-0658">Purine biosynthesis</keyword>
<keyword id="KW-1185">Reference proteome</keyword>